<evidence type="ECO:0000255" key="1">
    <source>
        <dbReference type="HAMAP-Rule" id="MF_01527"/>
    </source>
</evidence>
<reference key="1">
    <citation type="journal article" date="2006" name="J. Bacteriol.">
        <title>The genome sequence of the obligately chemolithoautotrophic, facultatively anaerobic bacterium Thiobacillus denitrificans.</title>
        <authorList>
            <person name="Beller H.R."/>
            <person name="Chain P.S."/>
            <person name="Letain T.E."/>
            <person name="Chakicherla A."/>
            <person name="Larimer F.W."/>
            <person name="Richardson P.M."/>
            <person name="Coleman M.A."/>
            <person name="Wood A.P."/>
            <person name="Kelly D.P."/>
        </authorList>
    </citation>
    <scope>NUCLEOTIDE SEQUENCE [LARGE SCALE GENOMIC DNA]</scope>
    <source>
        <strain>ATCC 25259 / T1</strain>
    </source>
</reference>
<sequence length="269" mass="30583">MNEICDTAVCMPDVQSSADTRQIAIDKVGIKSIRHPVRVADKADGVQHTIANFNMYVFLPHNFKGTHMSRFIEILNTREREISVENFEGMLRQMVERLEAESGYIEMTFPYFINKSAPVSGVQSMLDYEVTFVGAIENGQYTHTTKVVVPVTSLCPCSKKISEYGAHNQRSHVTVTAKTRGFLWIEDLVRKVEDQASCELFGLLKRPDEKYVTERAYDNPKFVEDIVRDVAAAMNAEPLIDAYVVEAENFESIHNHSAYALIEHDKRKK</sequence>
<feature type="chain" id="PRO_0000289529" description="GTP cyclohydrolase FolE2">
    <location>
        <begin position="1"/>
        <end position="269"/>
    </location>
</feature>
<feature type="site" description="May be catalytically important" evidence="1">
    <location>
        <position position="155"/>
    </location>
</feature>
<proteinExistence type="inferred from homology"/>
<accession>Q3SKF2</accession>
<keyword id="KW-0378">Hydrolase</keyword>
<keyword id="KW-1185">Reference proteome</keyword>
<organism>
    <name type="scientific">Thiobacillus denitrificans (strain ATCC 25259 / T1)</name>
    <dbReference type="NCBI Taxonomy" id="292415"/>
    <lineage>
        <taxon>Bacteria</taxon>
        <taxon>Pseudomonadati</taxon>
        <taxon>Pseudomonadota</taxon>
        <taxon>Betaproteobacteria</taxon>
        <taxon>Nitrosomonadales</taxon>
        <taxon>Thiobacillaceae</taxon>
        <taxon>Thiobacillus</taxon>
    </lineage>
</organism>
<comment type="function">
    <text evidence="1">Converts GTP to 7,8-dihydroneopterin triphosphate.</text>
</comment>
<comment type="catalytic activity">
    <reaction evidence="1">
        <text>GTP + H2O = 7,8-dihydroneopterin 3'-triphosphate + formate + H(+)</text>
        <dbReference type="Rhea" id="RHEA:17473"/>
        <dbReference type="ChEBI" id="CHEBI:15377"/>
        <dbReference type="ChEBI" id="CHEBI:15378"/>
        <dbReference type="ChEBI" id="CHEBI:15740"/>
        <dbReference type="ChEBI" id="CHEBI:37565"/>
        <dbReference type="ChEBI" id="CHEBI:58462"/>
        <dbReference type="EC" id="3.5.4.16"/>
    </reaction>
</comment>
<comment type="pathway">
    <text evidence="1">Cofactor biosynthesis; 7,8-dihydroneopterin triphosphate biosynthesis; 7,8-dihydroneopterin triphosphate from GTP: step 1/1.</text>
</comment>
<comment type="similarity">
    <text evidence="1">Belongs to the GTP cyclohydrolase IV family.</text>
</comment>
<protein>
    <recommendedName>
        <fullName evidence="1">GTP cyclohydrolase FolE2</fullName>
        <ecNumber evidence="1">3.5.4.16</ecNumber>
    </recommendedName>
</protein>
<name>GCH4_THIDA</name>
<dbReference type="EC" id="3.5.4.16" evidence="1"/>
<dbReference type="EMBL" id="CP000116">
    <property type="protein sequence ID" value="AAZ96831.1"/>
    <property type="molecule type" value="Genomic_DNA"/>
</dbReference>
<dbReference type="RefSeq" id="WP_011311390.1">
    <property type="nucleotide sequence ID" value="NC_007404.1"/>
</dbReference>
<dbReference type="SMR" id="Q3SKF2"/>
<dbReference type="STRING" id="292415.Tbd_0878"/>
<dbReference type="KEGG" id="tbd:Tbd_0878"/>
<dbReference type="eggNOG" id="COG1469">
    <property type="taxonomic scope" value="Bacteria"/>
</dbReference>
<dbReference type="HOGENOM" id="CLU_062816_1_1_4"/>
<dbReference type="OrthoDB" id="9774824at2"/>
<dbReference type="UniPathway" id="UPA00848">
    <property type="reaction ID" value="UER00151"/>
</dbReference>
<dbReference type="Proteomes" id="UP000008291">
    <property type="component" value="Chromosome"/>
</dbReference>
<dbReference type="GO" id="GO:0003934">
    <property type="term" value="F:GTP cyclohydrolase I activity"/>
    <property type="evidence" value="ECO:0007669"/>
    <property type="project" value="UniProtKB-UniRule"/>
</dbReference>
<dbReference type="GO" id="GO:0046654">
    <property type="term" value="P:tetrahydrofolate biosynthetic process"/>
    <property type="evidence" value="ECO:0007669"/>
    <property type="project" value="UniProtKB-UniRule"/>
</dbReference>
<dbReference type="Gene3D" id="3.10.270.10">
    <property type="entry name" value="Urate Oxidase"/>
    <property type="match status" value="1"/>
</dbReference>
<dbReference type="HAMAP" id="MF_01527_B">
    <property type="entry name" value="GTP_cyclohydrol_B"/>
    <property type="match status" value="1"/>
</dbReference>
<dbReference type="InterPro" id="IPR022838">
    <property type="entry name" value="GTP_cyclohydrolase_FolE2"/>
</dbReference>
<dbReference type="InterPro" id="IPR003801">
    <property type="entry name" value="GTP_cyclohydrolase_FolE2/MptA"/>
</dbReference>
<dbReference type="NCBIfam" id="NF010200">
    <property type="entry name" value="PRK13674.1-1"/>
    <property type="match status" value="1"/>
</dbReference>
<dbReference type="PANTHER" id="PTHR36445">
    <property type="entry name" value="GTP CYCLOHYDROLASE MPTA"/>
    <property type="match status" value="1"/>
</dbReference>
<dbReference type="PANTHER" id="PTHR36445:SF1">
    <property type="entry name" value="GTP CYCLOHYDROLASE MPTA"/>
    <property type="match status" value="1"/>
</dbReference>
<dbReference type="Pfam" id="PF02649">
    <property type="entry name" value="GCHY-1"/>
    <property type="match status" value="1"/>
</dbReference>
<gene>
    <name evidence="1" type="primary">folE2</name>
    <name type="ordered locus">Tbd_0878</name>
</gene>